<accession>A0L8F5</accession>
<dbReference type="EMBL" id="CP000471">
    <property type="protein sequence ID" value="ABK44248.1"/>
    <property type="molecule type" value="Genomic_DNA"/>
</dbReference>
<dbReference type="RefSeq" id="WP_011713396.1">
    <property type="nucleotide sequence ID" value="NC_008576.1"/>
</dbReference>
<dbReference type="SMR" id="A0L8F5"/>
<dbReference type="STRING" id="156889.Mmc1_1740"/>
<dbReference type="KEGG" id="mgm:Mmc1_1740"/>
<dbReference type="eggNOG" id="COG0353">
    <property type="taxonomic scope" value="Bacteria"/>
</dbReference>
<dbReference type="HOGENOM" id="CLU_060739_1_0_5"/>
<dbReference type="OrthoDB" id="9802672at2"/>
<dbReference type="Proteomes" id="UP000002586">
    <property type="component" value="Chromosome"/>
</dbReference>
<dbReference type="GO" id="GO:0003677">
    <property type="term" value="F:DNA binding"/>
    <property type="evidence" value="ECO:0007669"/>
    <property type="project" value="UniProtKB-UniRule"/>
</dbReference>
<dbReference type="GO" id="GO:0008270">
    <property type="term" value="F:zinc ion binding"/>
    <property type="evidence" value="ECO:0007669"/>
    <property type="project" value="UniProtKB-KW"/>
</dbReference>
<dbReference type="GO" id="GO:0006310">
    <property type="term" value="P:DNA recombination"/>
    <property type="evidence" value="ECO:0007669"/>
    <property type="project" value="UniProtKB-UniRule"/>
</dbReference>
<dbReference type="GO" id="GO:0006281">
    <property type="term" value="P:DNA repair"/>
    <property type="evidence" value="ECO:0007669"/>
    <property type="project" value="UniProtKB-UniRule"/>
</dbReference>
<dbReference type="CDD" id="cd01025">
    <property type="entry name" value="TOPRIM_recR"/>
    <property type="match status" value="1"/>
</dbReference>
<dbReference type="Gene3D" id="3.30.60.80">
    <property type="match status" value="1"/>
</dbReference>
<dbReference type="Gene3D" id="3.40.1360.10">
    <property type="match status" value="1"/>
</dbReference>
<dbReference type="Gene3D" id="6.10.250.240">
    <property type="match status" value="1"/>
</dbReference>
<dbReference type="Gene3D" id="1.10.8.420">
    <property type="entry name" value="RecR Domain 1"/>
    <property type="match status" value="1"/>
</dbReference>
<dbReference type="HAMAP" id="MF_00017">
    <property type="entry name" value="RecR"/>
    <property type="match status" value="1"/>
</dbReference>
<dbReference type="InterPro" id="IPR000093">
    <property type="entry name" value="DNA_Rcmb_RecR"/>
</dbReference>
<dbReference type="InterPro" id="IPR023627">
    <property type="entry name" value="Rcmb_RecR"/>
</dbReference>
<dbReference type="InterPro" id="IPR015967">
    <property type="entry name" value="Rcmb_RecR_Znf"/>
</dbReference>
<dbReference type="InterPro" id="IPR006171">
    <property type="entry name" value="TOPRIM_dom"/>
</dbReference>
<dbReference type="InterPro" id="IPR034137">
    <property type="entry name" value="TOPRIM_RecR"/>
</dbReference>
<dbReference type="NCBIfam" id="TIGR00615">
    <property type="entry name" value="recR"/>
    <property type="match status" value="1"/>
</dbReference>
<dbReference type="PANTHER" id="PTHR30446">
    <property type="entry name" value="RECOMBINATION PROTEIN RECR"/>
    <property type="match status" value="1"/>
</dbReference>
<dbReference type="PANTHER" id="PTHR30446:SF0">
    <property type="entry name" value="RECOMBINATION PROTEIN RECR"/>
    <property type="match status" value="1"/>
</dbReference>
<dbReference type="Pfam" id="PF21175">
    <property type="entry name" value="RecR_C"/>
    <property type="match status" value="1"/>
</dbReference>
<dbReference type="Pfam" id="PF21176">
    <property type="entry name" value="RecR_HhH"/>
    <property type="match status" value="1"/>
</dbReference>
<dbReference type="Pfam" id="PF02132">
    <property type="entry name" value="RecR_ZnF"/>
    <property type="match status" value="1"/>
</dbReference>
<dbReference type="Pfam" id="PF13662">
    <property type="entry name" value="Toprim_4"/>
    <property type="match status" value="1"/>
</dbReference>
<dbReference type="SMART" id="SM00493">
    <property type="entry name" value="TOPRIM"/>
    <property type="match status" value="1"/>
</dbReference>
<dbReference type="SUPFAM" id="SSF111304">
    <property type="entry name" value="Recombination protein RecR"/>
    <property type="match status" value="1"/>
</dbReference>
<dbReference type="PROSITE" id="PS01300">
    <property type="entry name" value="RECR"/>
    <property type="match status" value="1"/>
</dbReference>
<dbReference type="PROSITE" id="PS50880">
    <property type="entry name" value="TOPRIM"/>
    <property type="match status" value="1"/>
</dbReference>
<protein>
    <recommendedName>
        <fullName evidence="1">Recombination protein RecR</fullName>
    </recommendedName>
</protein>
<gene>
    <name evidence="1" type="primary">recR</name>
    <name type="ordered locus">Mmc1_1740</name>
</gene>
<keyword id="KW-0227">DNA damage</keyword>
<keyword id="KW-0233">DNA recombination</keyword>
<keyword id="KW-0234">DNA repair</keyword>
<keyword id="KW-0479">Metal-binding</keyword>
<keyword id="KW-1185">Reference proteome</keyword>
<keyword id="KW-0862">Zinc</keyword>
<keyword id="KW-0863">Zinc-finger</keyword>
<name>RECR_MAGMM</name>
<reference key="1">
    <citation type="journal article" date="2009" name="Appl. Environ. Microbiol.">
        <title>Complete genome sequence of the chemolithoautotrophic marine magnetotactic coccus strain MC-1.</title>
        <authorList>
            <person name="Schubbe S."/>
            <person name="Williams T.J."/>
            <person name="Xie G."/>
            <person name="Kiss H.E."/>
            <person name="Brettin T.S."/>
            <person name="Martinez D."/>
            <person name="Ross C.A."/>
            <person name="Schuler D."/>
            <person name="Cox B.L."/>
            <person name="Nealson K.H."/>
            <person name="Bazylinski D.A."/>
        </authorList>
    </citation>
    <scope>NUCLEOTIDE SEQUENCE [LARGE SCALE GENOMIC DNA]</scope>
    <source>
        <strain>ATCC BAA-1437 / JCM 17883 / MC-1</strain>
    </source>
</reference>
<comment type="function">
    <text evidence="1">May play a role in DNA repair. It seems to be involved in an RecBC-independent recombinational process of DNA repair. It may act with RecF and RecO.</text>
</comment>
<comment type="similarity">
    <text evidence="1">Belongs to the RecR family.</text>
</comment>
<feature type="chain" id="PRO_0000322905" description="Recombination protein RecR">
    <location>
        <begin position="1"/>
        <end position="200"/>
    </location>
</feature>
<feature type="domain" description="Toprim" evidence="1">
    <location>
        <begin position="81"/>
        <end position="176"/>
    </location>
</feature>
<feature type="zinc finger region" description="C4-type" evidence="1">
    <location>
        <begin position="58"/>
        <end position="73"/>
    </location>
</feature>
<proteinExistence type="inferred from homology"/>
<evidence type="ECO:0000255" key="1">
    <source>
        <dbReference type="HAMAP-Rule" id="MF_00017"/>
    </source>
</evidence>
<organism>
    <name type="scientific">Magnetococcus marinus (strain ATCC BAA-1437 / JCM 17883 / MC-1)</name>
    <dbReference type="NCBI Taxonomy" id="156889"/>
    <lineage>
        <taxon>Bacteria</taxon>
        <taxon>Pseudomonadati</taxon>
        <taxon>Pseudomonadota</taxon>
        <taxon>Alphaproteobacteria</taxon>
        <taxon>Magnetococcales</taxon>
        <taxon>Magnetococcaceae</taxon>
        <taxon>Magnetococcus</taxon>
    </lineage>
</organism>
<sequence>MSSGLPTLERSIELFSRLPGVGRKSAQRMVYHLLKEGGREATLLGQGLLALSERIHFCEVCHNLAEEGLCAICQDSKRDHGLICVVEEPVDVLAMERAGAYRGLYHVLGGRLSPMDGIGPDALYLDALLERLQQGGVRELIIATNPTVAGEATAHYITQLAQPLTIDISRLAYGMPMGGELEYLDESTLFQALQGRRGVL</sequence>